<keyword id="KW-0067">ATP-binding</keyword>
<keyword id="KW-0963">Cytoplasm</keyword>
<keyword id="KW-0547">Nucleotide-binding</keyword>
<keyword id="KW-1185">Reference proteome</keyword>
<keyword id="KW-0694">RNA-binding</keyword>
<keyword id="KW-0784">Thiamine biosynthesis</keyword>
<keyword id="KW-0808">Transferase</keyword>
<keyword id="KW-0820">tRNA-binding</keyword>
<dbReference type="EC" id="2.8.1.4" evidence="1"/>
<dbReference type="EMBL" id="AE000666">
    <property type="protein sequence ID" value="AAB86157.1"/>
    <property type="molecule type" value="Genomic_DNA"/>
</dbReference>
<dbReference type="PIR" id="C69092">
    <property type="entry name" value="C69092"/>
</dbReference>
<dbReference type="RefSeq" id="WP_010877292.1">
    <property type="nucleotide sequence ID" value="NC_000916.1"/>
</dbReference>
<dbReference type="SMR" id="O27720"/>
<dbReference type="FunCoup" id="O27720">
    <property type="interactions" value="91"/>
</dbReference>
<dbReference type="STRING" id="187420.MTH_1685"/>
<dbReference type="PaxDb" id="187420-MTH_1685"/>
<dbReference type="EnsemblBacteria" id="AAB86157">
    <property type="protein sequence ID" value="AAB86157"/>
    <property type="gene ID" value="MTH_1685"/>
</dbReference>
<dbReference type="GeneID" id="1470770"/>
<dbReference type="GeneID" id="77402203"/>
<dbReference type="KEGG" id="mth:MTH_1685"/>
<dbReference type="PATRIC" id="fig|187420.15.peg.1645"/>
<dbReference type="HOGENOM" id="CLU_037952_4_0_2"/>
<dbReference type="InParanoid" id="O27720"/>
<dbReference type="UniPathway" id="UPA00060"/>
<dbReference type="Proteomes" id="UP000005223">
    <property type="component" value="Chromosome"/>
</dbReference>
<dbReference type="GO" id="GO:0005829">
    <property type="term" value="C:cytosol"/>
    <property type="evidence" value="ECO:0007669"/>
    <property type="project" value="TreeGrafter"/>
</dbReference>
<dbReference type="GO" id="GO:0005524">
    <property type="term" value="F:ATP binding"/>
    <property type="evidence" value="ECO:0007669"/>
    <property type="project" value="UniProtKB-UniRule"/>
</dbReference>
<dbReference type="GO" id="GO:0004810">
    <property type="term" value="F:CCA tRNA nucleotidyltransferase activity"/>
    <property type="evidence" value="ECO:0007669"/>
    <property type="project" value="InterPro"/>
</dbReference>
<dbReference type="GO" id="GO:0000049">
    <property type="term" value="F:tRNA binding"/>
    <property type="evidence" value="ECO:0007669"/>
    <property type="project" value="UniProtKB-UniRule"/>
</dbReference>
<dbReference type="GO" id="GO:0140741">
    <property type="term" value="F:tRNA-uracil-4 sulfurtransferase activity"/>
    <property type="evidence" value="ECO:0007669"/>
    <property type="project" value="UniProtKB-EC"/>
</dbReference>
<dbReference type="GO" id="GO:0009228">
    <property type="term" value="P:thiamine biosynthetic process"/>
    <property type="evidence" value="ECO:0007669"/>
    <property type="project" value="UniProtKB-KW"/>
</dbReference>
<dbReference type="GO" id="GO:0009229">
    <property type="term" value="P:thiamine diphosphate biosynthetic process"/>
    <property type="evidence" value="ECO:0007669"/>
    <property type="project" value="UniProtKB-UniRule"/>
</dbReference>
<dbReference type="GO" id="GO:0052837">
    <property type="term" value="P:thiazole biosynthetic process"/>
    <property type="evidence" value="ECO:0007669"/>
    <property type="project" value="TreeGrafter"/>
</dbReference>
<dbReference type="GO" id="GO:0002937">
    <property type="term" value="P:tRNA 4-thiouridine biosynthesis"/>
    <property type="evidence" value="ECO:0007669"/>
    <property type="project" value="TreeGrafter"/>
</dbReference>
<dbReference type="CDD" id="cd01712">
    <property type="entry name" value="PPase_ThiI"/>
    <property type="match status" value="1"/>
</dbReference>
<dbReference type="CDD" id="cd11716">
    <property type="entry name" value="THUMP_ThiI"/>
    <property type="match status" value="1"/>
</dbReference>
<dbReference type="FunFam" id="3.40.50.620:FF:000053">
    <property type="entry name" value="Probable tRNA sulfurtransferase"/>
    <property type="match status" value="1"/>
</dbReference>
<dbReference type="Gene3D" id="3.30.2130.30">
    <property type="match status" value="1"/>
</dbReference>
<dbReference type="Gene3D" id="3.40.50.620">
    <property type="entry name" value="HUPs"/>
    <property type="match status" value="1"/>
</dbReference>
<dbReference type="HAMAP" id="MF_00021">
    <property type="entry name" value="ThiI"/>
    <property type="match status" value="1"/>
</dbReference>
<dbReference type="InterPro" id="IPR014729">
    <property type="entry name" value="Rossmann-like_a/b/a_fold"/>
</dbReference>
<dbReference type="InterPro" id="IPR020536">
    <property type="entry name" value="ThiI_AANH"/>
</dbReference>
<dbReference type="InterPro" id="IPR054173">
    <property type="entry name" value="ThiI_fer"/>
</dbReference>
<dbReference type="InterPro" id="IPR049961">
    <property type="entry name" value="ThiI_N"/>
</dbReference>
<dbReference type="InterPro" id="IPR004114">
    <property type="entry name" value="THUMP_dom"/>
</dbReference>
<dbReference type="InterPro" id="IPR049962">
    <property type="entry name" value="THUMP_ThiI"/>
</dbReference>
<dbReference type="InterPro" id="IPR003720">
    <property type="entry name" value="tRNA_STrfase"/>
</dbReference>
<dbReference type="InterPro" id="IPR050102">
    <property type="entry name" value="tRNA_sulfurtransferase_ThiI"/>
</dbReference>
<dbReference type="NCBIfam" id="TIGR00342">
    <property type="entry name" value="tRNA uracil 4-sulfurtransferase ThiI"/>
    <property type="match status" value="1"/>
</dbReference>
<dbReference type="PANTHER" id="PTHR43209">
    <property type="entry name" value="TRNA SULFURTRANSFERASE"/>
    <property type="match status" value="1"/>
</dbReference>
<dbReference type="PANTHER" id="PTHR43209:SF1">
    <property type="entry name" value="TRNA SULFURTRANSFERASE"/>
    <property type="match status" value="1"/>
</dbReference>
<dbReference type="Pfam" id="PF02568">
    <property type="entry name" value="ThiI"/>
    <property type="match status" value="1"/>
</dbReference>
<dbReference type="Pfam" id="PF22025">
    <property type="entry name" value="ThiI_fer"/>
    <property type="match status" value="1"/>
</dbReference>
<dbReference type="Pfam" id="PF02926">
    <property type="entry name" value="THUMP"/>
    <property type="match status" value="1"/>
</dbReference>
<dbReference type="SMART" id="SM00981">
    <property type="entry name" value="THUMP"/>
    <property type="match status" value="1"/>
</dbReference>
<dbReference type="SUPFAM" id="SSF52402">
    <property type="entry name" value="Adenine nucleotide alpha hydrolases-like"/>
    <property type="match status" value="1"/>
</dbReference>
<dbReference type="SUPFAM" id="SSF143437">
    <property type="entry name" value="THUMP domain-like"/>
    <property type="match status" value="1"/>
</dbReference>
<dbReference type="PROSITE" id="PS51165">
    <property type="entry name" value="THUMP"/>
    <property type="match status" value="1"/>
</dbReference>
<proteinExistence type="inferred from homology"/>
<gene>
    <name evidence="1" type="primary">thiI</name>
    <name type="ordered locus">MTH_1685</name>
</gene>
<name>THII_METTH</name>
<reference key="1">
    <citation type="journal article" date="1997" name="J. Bacteriol.">
        <title>Complete genome sequence of Methanobacterium thermoautotrophicum deltaH: functional analysis and comparative genomics.</title>
        <authorList>
            <person name="Smith D.R."/>
            <person name="Doucette-Stamm L.A."/>
            <person name="Deloughery C."/>
            <person name="Lee H.-M."/>
            <person name="Dubois J."/>
            <person name="Aldredge T."/>
            <person name="Bashirzadeh R."/>
            <person name="Blakely D."/>
            <person name="Cook R."/>
            <person name="Gilbert K."/>
            <person name="Harrison D."/>
            <person name="Hoang L."/>
            <person name="Keagle P."/>
            <person name="Lumm W."/>
            <person name="Pothier B."/>
            <person name="Qiu D."/>
            <person name="Spadafora R."/>
            <person name="Vicare R."/>
            <person name="Wang Y."/>
            <person name="Wierzbowski J."/>
            <person name="Gibson R."/>
            <person name="Jiwani N."/>
            <person name="Caruso A."/>
            <person name="Bush D."/>
            <person name="Safer H."/>
            <person name="Patwell D."/>
            <person name="Prabhakar S."/>
            <person name="McDougall S."/>
            <person name="Shimer G."/>
            <person name="Goyal A."/>
            <person name="Pietrovski S."/>
            <person name="Church G.M."/>
            <person name="Daniels C.J."/>
            <person name="Mao J.-I."/>
            <person name="Rice P."/>
            <person name="Noelling J."/>
            <person name="Reeve J.N."/>
        </authorList>
    </citation>
    <scope>NUCLEOTIDE SEQUENCE [LARGE SCALE GENOMIC DNA]</scope>
    <source>
        <strain>ATCC 29096 / DSM 1053 / JCM 10044 / NBRC 100330 / Delta H</strain>
    </source>
</reference>
<organism>
    <name type="scientific">Methanothermobacter thermautotrophicus (strain ATCC 29096 / DSM 1053 / JCM 10044 / NBRC 100330 / Delta H)</name>
    <name type="common">Methanobacterium thermoautotrophicum</name>
    <dbReference type="NCBI Taxonomy" id="187420"/>
    <lineage>
        <taxon>Archaea</taxon>
        <taxon>Methanobacteriati</taxon>
        <taxon>Methanobacteriota</taxon>
        <taxon>Methanomada group</taxon>
        <taxon>Methanobacteria</taxon>
        <taxon>Methanobacteriales</taxon>
        <taxon>Methanobacteriaceae</taxon>
        <taxon>Methanothermobacter</taxon>
    </lineage>
</organism>
<feature type="chain" id="PRO_0000154896" description="Probable tRNA sulfurtransferase">
    <location>
        <begin position="1"/>
        <end position="389"/>
    </location>
</feature>
<feature type="domain" description="THUMP" evidence="1">
    <location>
        <begin position="57"/>
        <end position="165"/>
    </location>
</feature>
<feature type="binding site" evidence="1">
    <location>
        <begin position="183"/>
        <end position="184"/>
    </location>
    <ligand>
        <name>ATP</name>
        <dbReference type="ChEBI" id="CHEBI:30616"/>
    </ligand>
</feature>
<feature type="binding site" evidence="1">
    <location>
        <position position="267"/>
    </location>
    <ligand>
        <name>ATP</name>
        <dbReference type="ChEBI" id="CHEBI:30616"/>
    </ligand>
</feature>
<feature type="binding site" evidence="1">
    <location>
        <position position="289"/>
    </location>
    <ligand>
        <name>ATP</name>
        <dbReference type="ChEBI" id="CHEBI:30616"/>
    </ligand>
</feature>
<feature type="binding site" evidence="1">
    <location>
        <position position="298"/>
    </location>
    <ligand>
        <name>ATP</name>
        <dbReference type="ChEBI" id="CHEBI:30616"/>
    </ligand>
</feature>
<comment type="function">
    <text evidence="1">Catalyzes the ATP-dependent transfer of a sulfur to tRNA to produce 4-thiouridine in position 8 of tRNAs, which functions as a near-UV photosensor. Also catalyzes the transfer of sulfur to the sulfur carrier protein ThiS, forming ThiS-thiocarboxylate. This is a step in the synthesis of thiazole, in the thiamine biosynthesis pathway. The sulfur is donated as persulfide by IscS.</text>
</comment>
<comment type="catalytic activity">
    <reaction evidence="1">
        <text>[ThiI sulfur-carrier protein]-S-sulfanyl-L-cysteine + a uridine in tRNA + 2 reduced [2Fe-2S]-[ferredoxin] + ATP + H(+) = [ThiI sulfur-carrier protein]-L-cysteine + a 4-thiouridine in tRNA + 2 oxidized [2Fe-2S]-[ferredoxin] + AMP + diphosphate</text>
        <dbReference type="Rhea" id="RHEA:24176"/>
        <dbReference type="Rhea" id="RHEA-COMP:10000"/>
        <dbReference type="Rhea" id="RHEA-COMP:10001"/>
        <dbReference type="Rhea" id="RHEA-COMP:13337"/>
        <dbReference type="Rhea" id="RHEA-COMP:13338"/>
        <dbReference type="Rhea" id="RHEA-COMP:13339"/>
        <dbReference type="Rhea" id="RHEA-COMP:13340"/>
        <dbReference type="ChEBI" id="CHEBI:15378"/>
        <dbReference type="ChEBI" id="CHEBI:29950"/>
        <dbReference type="ChEBI" id="CHEBI:30616"/>
        <dbReference type="ChEBI" id="CHEBI:33019"/>
        <dbReference type="ChEBI" id="CHEBI:33737"/>
        <dbReference type="ChEBI" id="CHEBI:33738"/>
        <dbReference type="ChEBI" id="CHEBI:61963"/>
        <dbReference type="ChEBI" id="CHEBI:65315"/>
        <dbReference type="ChEBI" id="CHEBI:136798"/>
        <dbReference type="ChEBI" id="CHEBI:456215"/>
        <dbReference type="EC" id="2.8.1.4"/>
    </reaction>
</comment>
<comment type="catalytic activity">
    <reaction evidence="1">
        <text>[ThiS sulfur-carrier protein]-C-terminal Gly-Gly-AMP + S-sulfanyl-L-cysteinyl-[cysteine desulfurase] + AH2 = [ThiS sulfur-carrier protein]-C-terminal-Gly-aminoethanethioate + L-cysteinyl-[cysteine desulfurase] + A + AMP + 2 H(+)</text>
        <dbReference type="Rhea" id="RHEA:43340"/>
        <dbReference type="Rhea" id="RHEA-COMP:12157"/>
        <dbReference type="Rhea" id="RHEA-COMP:12158"/>
        <dbReference type="Rhea" id="RHEA-COMP:12910"/>
        <dbReference type="Rhea" id="RHEA-COMP:19908"/>
        <dbReference type="ChEBI" id="CHEBI:13193"/>
        <dbReference type="ChEBI" id="CHEBI:15378"/>
        <dbReference type="ChEBI" id="CHEBI:17499"/>
        <dbReference type="ChEBI" id="CHEBI:29950"/>
        <dbReference type="ChEBI" id="CHEBI:61963"/>
        <dbReference type="ChEBI" id="CHEBI:90618"/>
        <dbReference type="ChEBI" id="CHEBI:232372"/>
        <dbReference type="ChEBI" id="CHEBI:456215"/>
    </reaction>
</comment>
<comment type="pathway">
    <text evidence="1">Cofactor biosynthesis; thiamine diphosphate biosynthesis.</text>
</comment>
<comment type="subcellular location">
    <subcellularLocation>
        <location evidence="1">Cytoplasm</location>
    </subcellularLocation>
</comment>
<comment type="similarity">
    <text evidence="1">Belongs to the ThiI family.</text>
</comment>
<protein>
    <recommendedName>
        <fullName evidence="1">Probable tRNA sulfurtransferase</fullName>
        <ecNumber evidence="1">2.8.1.4</ecNumber>
    </recommendedName>
    <alternativeName>
        <fullName evidence="1">Sulfur carrier protein ThiS sulfurtransferase</fullName>
    </alternativeName>
    <alternativeName>
        <fullName evidence="1">Thiamine biosynthesis protein ThiI</fullName>
    </alternativeName>
    <alternativeName>
        <fullName evidence="1">tRNA 4-thiouridine synthase</fullName>
    </alternativeName>
</protein>
<sequence length="389" mass="42473">MILDYDVILARYGEVAIKGPSVRRRFEGKLLHNIKSAFSCRAELRHGRIFIFPEDMDEALDRLSKIFGIVSFSPAVTAETGFDSIEDSLREYIHELRSEGLLTSRTPFAIRCRRVGEHDFTSQEMAAFAGSVVVGEIGAPVDLGNPDLEIHLEIREDETYIYHRVIPGPGGLPAGTQGKVVALLSGGIDSPVATYLMMKRGCQVVAVHMDNAPFTGEEAEEKVEKIAAKLAEYSAGVEFKLRTFSYGRYLESCRRGAPEKMTCVLCKFGMYHLAEMVAEEEGALAIVDGSSLGQVASQTLPNILATRMGVNIPILSPLIGMDKVEIENLAKRIGTYDISVIPDGGCSAVPAHPSTASPPEAVMEASEKINVKEEVAEIFRKGSKTRIFS</sequence>
<accession>O27720</accession>
<evidence type="ECO:0000255" key="1">
    <source>
        <dbReference type="HAMAP-Rule" id="MF_00021"/>
    </source>
</evidence>